<keyword id="KW-1185">Reference proteome</keyword>
<keyword id="KW-0687">Ribonucleoprotein</keyword>
<keyword id="KW-0689">Ribosomal protein</keyword>
<dbReference type="EMBL" id="CP000494">
    <property type="protein sequence ID" value="ABQ37053.1"/>
    <property type="molecule type" value="Genomic_DNA"/>
</dbReference>
<dbReference type="RefSeq" id="WP_012045034.1">
    <property type="nucleotide sequence ID" value="NC_009485.1"/>
</dbReference>
<dbReference type="SMR" id="A5ELK9"/>
<dbReference type="STRING" id="288000.BBta_5052"/>
<dbReference type="KEGG" id="bbt:BBta_5052"/>
<dbReference type="eggNOG" id="COG1841">
    <property type="taxonomic scope" value="Bacteria"/>
</dbReference>
<dbReference type="HOGENOM" id="CLU_131047_1_2_5"/>
<dbReference type="OrthoDB" id="9812790at2"/>
<dbReference type="Proteomes" id="UP000000246">
    <property type="component" value="Chromosome"/>
</dbReference>
<dbReference type="GO" id="GO:0022625">
    <property type="term" value="C:cytosolic large ribosomal subunit"/>
    <property type="evidence" value="ECO:0007669"/>
    <property type="project" value="TreeGrafter"/>
</dbReference>
<dbReference type="GO" id="GO:0003735">
    <property type="term" value="F:structural constituent of ribosome"/>
    <property type="evidence" value="ECO:0007669"/>
    <property type="project" value="InterPro"/>
</dbReference>
<dbReference type="GO" id="GO:0006412">
    <property type="term" value="P:translation"/>
    <property type="evidence" value="ECO:0007669"/>
    <property type="project" value="UniProtKB-UniRule"/>
</dbReference>
<dbReference type="CDD" id="cd01658">
    <property type="entry name" value="Ribosomal_L30"/>
    <property type="match status" value="1"/>
</dbReference>
<dbReference type="Gene3D" id="3.30.1390.20">
    <property type="entry name" value="Ribosomal protein L30, ferredoxin-like fold domain"/>
    <property type="match status" value="1"/>
</dbReference>
<dbReference type="HAMAP" id="MF_01371_B">
    <property type="entry name" value="Ribosomal_uL30_B"/>
    <property type="match status" value="1"/>
</dbReference>
<dbReference type="InterPro" id="IPR036919">
    <property type="entry name" value="Ribo_uL30_ferredoxin-like_sf"/>
</dbReference>
<dbReference type="InterPro" id="IPR005996">
    <property type="entry name" value="Ribosomal_uL30_bac-type"/>
</dbReference>
<dbReference type="InterPro" id="IPR016082">
    <property type="entry name" value="Ribosomal_uL30_ferredoxin-like"/>
</dbReference>
<dbReference type="NCBIfam" id="TIGR01308">
    <property type="entry name" value="rpmD_bact"/>
    <property type="match status" value="1"/>
</dbReference>
<dbReference type="PANTHER" id="PTHR15892:SF2">
    <property type="entry name" value="LARGE RIBOSOMAL SUBUNIT PROTEIN UL30M"/>
    <property type="match status" value="1"/>
</dbReference>
<dbReference type="PANTHER" id="PTHR15892">
    <property type="entry name" value="MITOCHONDRIAL RIBOSOMAL PROTEIN L30"/>
    <property type="match status" value="1"/>
</dbReference>
<dbReference type="Pfam" id="PF00327">
    <property type="entry name" value="Ribosomal_L30"/>
    <property type="match status" value="1"/>
</dbReference>
<dbReference type="PIRSF" id="PIRSF002211">
    <property type="entry name" value="Ribosomal_L30_bac-type"/>
    <property type="match status" value="1"/>
</dbReference>
<dbReference type="SUPFAM" id="SSF55129">
    <property type="entry name" value="Ribosomal protein L30p/L7e"/>
    <property type="match status" value="1"/>
</dbReference>
<name>RL30_BRASB</name>
<protein>
    <recommendedName>
        <fullName evidence="1">Large ribosomal subunit protein uL30</fullName>
    </recommendedName>
    <alternativeName>
        <fullName evidence="2">50S ribosomal protein L30</fullName>
    </alternativeName>
</protein>
<organism>
    <name type="scientific">Bradyrhizobium sp. (strain BTAi1 / ATCC BAA-1182)</name>
    <dbReference type="NCBI Taxonomy" id="288000"/>
    <lineage>
        <taxon>Bacteria</taxon>
        <taxon>Pseudomonadati</taxon>
        <taxon>Pseudomonadota</taxon>
        <taxon>Alphaproteobacteria</taxon>
        <taxon>Hyphomicrobiales</taxon>
        <taxon>Nitrobacteraceae</taxon>
        <taxon>Bradyrhizobium</taxon>
    </lineage>
</organism>
<sequence length="63" mass="7146">MADAKTIKIEQIGSPIRRHHSQRETLIGLKLNKIGRVTELPDTPAVRGMITKVHHLVRIVDEK</sequence>
<gene>
    <name evidence="1" type="primary">rpmD</name>
    <name type="ordered locus">BBta_5052</name>
</gene>
<reference key="1">
    <citation type="journal article" date="2007" name="Science">
        <title>Legumes symbioses: absence of nod genes in photosynthetic bradyrhizobia.</title>
        <authorList>
            <person name="Giraud E."/>
            <person name="Moulin L."/>
            <person name="Vallenet D."/>
            <person name="Barbe V."/>
            <person name="Cytryn E."/>
            <person name="Avarre J.-C."/>
            <person name="Jaubert M."/>
            <person name="Simon D."/>
            <person name="Cartieaux F."/>
            <person name="Prin Y."/>
            <person name="Bena G."/>
            <person name="Hannibal L."/>
            <person name="Fardoux J."/>
            <person name="Kojadinovic M."/>
            <person name="Vuillet L."/>
            <person name="Lajus A."/>
            <person name="Cruveiller S."/>
            <person name="Rouy Z."/>
            <person name="Mangenot S."/>
            <person name="Segurens B."/>
            <person name="Dossat C."/>
            <person name="Franck W.L."/>
            <person name="Chang W.-S."/>
            <person name="Saunders E."/>
            <person name="Bruce D."/>
            <person name="Richardson P."/>
            <person name="Normand P."/>
            <person name="Dreyfus B."/>
            <person name="Pignol D."/>
            <person name="Stacey G."/>
            <person name="Emerich D."/>
            <person name="Vermeglio A."/>
            <person name="Medigue C."/>
            <person name="Sadowsky M."/>
        </authorList>
    </citation>
    <scope>NUCLEOTIDE SEQUENCE [LARGE SCALE GENOMIC DNA]</scope>
    <source>
        <strain>BTAi1 / ATCC BAA-1182</strain>
    </source>
</reference>
<comment type="subunit">
    <text evidence="1">Part of the 50S ribosomal subunit.</text>
</comment>
<comment type="similarity">
    <text evidence="1">Belongs to the universal ribosomal protein uL30 family.</text>
</comment>
<proteinExistence type="inferred from homology"/>
<feature type="chain" id="PRO_0000347080" description="Large ribosomal subunit protein uL30">
    <location>
        <begin position="1"/>
        <end position="63"/>
    </location>
</feature>
<accession>A5ELK9</accession>
<evidence type="ECO:0000255" key="1">
    <source>
        <dbReference type="HAMAP-Rule" id="MF_01371"/>
    </source>
</evidence>
<evidence type="ECO:0000305" key="2"/>